<accession>B7N8J2</accession>
<dbReference type="EMBL" id="CU928163">
    <property type="protein sequence ID" value="CAR11543.1"/>
    <property type="molecule type" value="Genomic_DNA"/>
</dbReference>
<dbReference type="RefSeq" id="YP_002411093.1">
    <property type="nucleotide sequence ID" value="NC_011751.1"/>
</dbReference>
<dbReference type="SMR" id="B7N8J2"/>
<dbReference type="STRING" id="585056.ECUMN_0328"/>
<dbReference type="KEGG" id="eum:ECUMN_0328"/>
<dbReference type="PATRIC" id="fig|585056.7.peg.524"/>
<dbReference type="HOGENOM" id="CLU_128111_0_0_6"/>
<dbReference type="Proteomes" id="UP000007097">
    <property type="component" value="Chromosome"/>
</dbReference>
<dbReference type="GO" id="GO:0005737">
    <property type="term" value="C:cytoplasm"/>
    <property type="evidence" value="ECO:0007669"/>
    <property type="project" value="UniProtKB-SubCell"/>
</dbReference>
<dbReference type="GO" id="GO:0003677">
    <property type="term" value="F:DNA binding"/>
    <property type="evidence" value="ECO:0007669"/>
    <property type="project" value="UniProtKB-KW"/>
</dbReference>
<dbReference type="GO" id="GO:0006355">
    <property type="term" value="P:regulation of DNA-templated transcription"/>
    <property type="evidence" value="ECO:0007669"/>
    <property type="project" value="InterPro"/>
</dbReference>
<dbReference type="CDD" id="cd06170">
    <property type="entry name" value="LuxR_C_like"/>
    <property type="match status" value="1"/>
</dbReference>
<dbReference type="Gene3D" id="1.10.10.10">
    <property type="entry name" value="Winged helix-like DNA-binding domain superfamily/Winged helix DNA-binding domain"/>
    <property type="match status" value="1"/>
</dbReference>
<dbReference type="InterPro" id="IPR016032">
    <property type="entry name" value="Sig_transdc_resp-reg_C-effctor"/>
</dbReference>
<dbReference type="InterPro" id="IPR000792">
    <property type="entry name" value="Tscrpt_reg_LuxR_C"/>
</dbReference>
<dbReference type="InterPro" id="IPR036388">
    <property type="entry name" value="WH-like_DNA-bd_sf"/>
</dbReference>
<dbReference type="Pfam" id="PF00196">
    <property type="entry name" value="GerE"/>
    <property type="match status" value="1"/>
</dbReference>
<dbReference type="PRINTS" id="PR00038">
    <property type="entry name" value="HTHLUXR"/>
</dbReference>
<dbReference type="SMART" id="SM00421">
    <property type="entry name" value="HTH_LUXR"/>
    <property type="match status" value="1"/>
</dbReference>
<dbReference type="SUPFAM" id="SSF46894">
    <property type="entry name" value="C-terminal effector domain of the bipartite response regulators"/>
    <property type="match status" value="1"/>
</dbReference>
<dbReference type="PROSITE" id="PS50043">
    <property type="entry name" value="HTH_LUXR_2"/>
    <property type="match status" value="1"/>
</dbReference>
<keyword id="KW-0010">Activator</keyword>
<keyword id="KW-0963">Cytoplasm</keyword>
<keyword id="KW-0238">DNA-binding</keyword>
<keyword id="KW-0804">Transcription</keyword>
<keyword id="KW-0805">Transcription regulation</keyword>
<comment type="function">
    <text evidence="1">Part of the ecpRABCDE operon, which encodes the E.coli common pilus (ECP). ECP is found in both commensal and pathogenic strains and plays a dual role in early-stage biofilm development and host cell recognition. Positively regulates the expression of the ecp operon (By similarity).</text>
</comment>
<comment type="subcellular location">
    <subcellularLocation>
        <location evidence="3">Cytoplasm</location>
    </subcellularLocation>
</comment>
<comment type="induction">
    <text evidence="1">Negatively regulated by H-NS. Positively autoregulated. Also positively regulated by IHF (By similarity).</text>
</comment>
<comment type="similarity">
    <text evidence="3">Belongs to the EcpR/MatA family.</text>
</comment>
<protein>
    <recommendedName>
        <fullName>HTH-type transcriptional regulator EcpR</fullName>
    </recommendedName>
</protein>
<proteinExistence type="inferred from homology"/>
<name>ECPR_ECOLU</name>
<evidence type="ECO:0000250" key="1"/>
<evidence type="ECO:0000255" key="2">
    <source>
        <dbReference type="PROSITE-ProRule" id="PRU00411"/>
    </source>
</evidence>
<evidence type="ECO:0000305" key="3"/>
<organism>
    <name type="scientific">Escherichia coli O17:K52:H18 (strain UMN026 / ExPEC)</name>
    <dbReference type="NCBI Taxonomy" id="585056"/>
    <lineage>
        <taxon>Bacteria</taxon>
        <taxon>Pseudomonadati</taxon>
        <taxon>Pseudomonadota</taxon>
        <taxon>Gammaproteobacteria</taxon>
        <taxon>Enterobacterales</taxon>
        <taxon>Enterobacteriaceae</taxon>
        <taxon>Escherichia</taxon>
    </lineage>
</organism>
<reference key="1">
    <citation type="journal article" date="2009" name="PLoS Genet.">
        <title>Organised genome dynamics in the Escherichia coli species results in highly diverse adaptive paths.</title>
        <authorList>
            <person name="Touchon M."/>
            <person name="Hoede C."/>
            <person name="Tenaillon O."/>
            <person name="Barbe V."/>
            <person name="Baeriswyl S."/>
            <person name="Bidet P."/>
            <person name="Bingen E."/>
            <person name="Bonacorsi S."/>
            <person name="Bouchier C."/>
            <person name="Bouvet O."/>
            <person name="Calteau A."/>
            <person name="Chiapello H."/>
            <person name="Clermont O."/>
            <person name="Cruveiller S."/>
            <person name="Danchin A."/>
            <person name="Diard M."/>
            <person name="Dossat C."/>
            <person name="Karoui M.E."/>
            <person name="Frapy E."/>
            <person name="Garry L."/>
            <person name="Ghigo J.M."/>
            <person name="Gilles A.M."/>
            <person name="Johnson J."/>
            <person name="Le Bouguenec C."/>
            <person name="Lescat M."/>
            <person name="Mangenot S."/>
            <person name="Martinez-Jehanne V."/>
            <person name="Matic I."/>
            <person name="Nassif X."/>
            <person name="Oztas S."/>
            <person name="Petit M.A."/>
            <person name="Pichon C."/>
            <person name="Rouy Z."/>
            <person name="Ruf C.S."/>
            <person name="Schneider D."/>
            <person name="Tourret J."/>
            <person name="Vacherie B."/>
            <person name="Vallenet D."/>
            <person name="Medigue C."/>
            <person name="Rocha E.P.C."/>
            <person name="Denamur E."/>
        </authorList>
    </citation>
    <scope>NUCLEOTIDE SEQUENCE [LARGE SCALE GENOMIC DNA]</scope>
    <source>
        <strain>UMN026 / ExPEC</strain>
    </source>
</reference>
<feature type="chain" id="PRO_0000369181" description="HTH-type transcriptional regulator EcpR">
    <location>
        <begin position="1"/>
        <end position="196"/>
    </location>
</feature>
<feature type="domain" description="HTH luxR-type" evidence="2">
    <location>
        <begin position="138"/>
        <end position="196"/>
    </location>
</feature>
<feature type="DNA-binding region" description="H-T-H motif" evidence="2">
    <location>
        <begin position="162"/>
        <end position="181"/>
    </location>
</feature>
<sequence>MTWQNDYSRDYEVKNHMECQNRSDKYIWSPHDAYFYKGLSELIVDIDRLIYLSLEKIRKDFVFINLNTDSLTEFINRDNEWLSAVKGKQVVLIAARKSEALANYWYYNSNIRGVVYAGLSRDIRKELAYVINGRFLRKDIKKDKITDREMEIIRMTAQGMLPKSIARIENCSVKTVYTHRRNAEAKLYSKIYKLVP</sequence>
<gene>
    <name type="primary">ecpR</name>
    <name type="synonym">matA</name>
    <name type="ordered locus">ECUMN_0328</name>
</gene>